<proteinExistence type="evidence at protein level"/>
<reference key="1">
    <citation type="journal article" date="2004" name="Nature">
        <title>The DNA sequence and comparative analysis of human chromosome 10.</title>
        <authorList>
            <person name="Deloukas P."/>
            <person name="Earthrowl M.E."/>
            <person name="Grafham D.V."/>
            <person name="Rubenfield M."/>
            <person name="French L."/>
            <person name="Steward C.A."/>
            <person name="Sims S.K."/>
            <person name="Jones M.C."/>
            <person name="Searle S."/>
            <person name="Scott C."/>
            <person name="Howe K."/>
            <person name="Hunt S.E."/>
            <person name="Andrews T.D."/>
            <person name="Gilbert J.G.R."/>
            <person name="Swarbreck D."/>
            <person name="Ashurst J.L."/>
            <person name="Taylor A."/>
            <person name="Battles J."/>
            <person name="Bird C.P."/>
            <person name="Ainscough R."/>
            <person name="Almeida J.P."/>
            <person name="Ashwell R.I.S."/>
            <person name="Ambrose K.D."/>
            <person name="Babbage A.K."/>
            <person name="Bagguley C.L."/>
            <person name="Bailey J."/>
            <person name="Banerjee R."/>
            <person name="Bates K."/>
            <person name="Beasley H."/>
            <person name="Bray-Allen S."/>
            <person name="Brown A.J."/>
            <person name="Brown J.Y."/>
            <person name="Burford D.C."/>
            <person name="Burrill W."/>
            <person name="Burton J."/>
            <person name="Cahill P."/>
            <person name="Camire D."/>
            <person name="Carter N.P."/>
            <person name="Chapman J.C."/>
            <person name="Clark S.Y."/>
            <person name="Clarke G."/>
            <person name="Clee C.M."/>
            <person name="Clegg S."/>
            <person name="Corby N."/>
            <person name="Coulson A."/>
            <person name="Dhami P."/>
            <person name="Dutta I."/>
            <person name="Dunn M."/>
            <person name="Faulkner L."/>
            <person name="Frankish A."/>
            <person name="Frankland J.A."/>
            <person name="Garner P."/>
            <person name="Garnett J."/>
            <person name="Gribble S."/>
            <person name="Griffiths C."/>
            <person name="Grocock R."/>
            <person name="Gustafson E."/>
            <person name="Hammond S."/>
            <person name="Harley J.L."/>
            <person name="Hart E."/>
            <person name="Heath P.D."/>
            <person name="Ho T.P."/>
            <person name="Hopkins B."/>
            <person name="Horne J."/>
            <person name="Howden P.J."/>
            <person name="Huckle E."/>
            <person name="Hynds C."/>
            <person name="Johnson C."/>
            <person name="Johnson D."/>
            <person name="Kana A."/>
            <person name="Kay M."/>
            <person name="Kimberley A.M."/>
            <person name="Kershaw J.K."/>
            <person name="Kokkinaki M."/>
            <person name="Laird G.K."/>
            <person name="Lawlor S."/>
            <person name="Lee H.M."/>
            <person name="Leongamornlert D.A."/>
            <person name="Laird G."/>
            <person name="Lloyd C."/>
            <person name="Lloyd D.M."/>
            <person name="Loveland J."/>
            <person name="Lovell J."/>
            <person name="McLaren S."/>
            <person name="McLay K.E."/>
            <person name="McMurray A."/>
            <person name="Mashreghi-Mohammadi M."/>
            <person name="Matthews L."/>
            <person name="Milne S."/>
            <person name="Nickerson T."/>
            <person name="Nguyen M."/>
            <person name="Overton-Larty E."/>
            <person name="Palmer S.A."/>
            <person name="Pearce A.V."/>
            <person name="Peck A.I."/>
            <person name="Pelan S."/>
            <person name="Phillimore B."/>
            <person name="Porter K."/>
            <person name="Rice C.M."/>
            <person name="Rogosin A."/>
            <person name="Ross M.T."/>
            <person name="Sarafidou T."/>
            <person name="Sehra H.K."/>
            <person name="Shownkeen R."/>
            <person name="Skuce C.D."/>
            <person name="Smith M."/>
            <person name="Standring L."/>
            <person name="Sycamore N."/>
            <person name="Tester J."/>
            <person name="Thorpe A."/>
            <person name="Torcasso W."/>
            <person name="Tracey A."/>
            <person name="Tromans A."/>
            <person name="Tsolas J."/>
            <person name="Wall M."/>
            <person name="Walsh J."/>
            <person name="Wang H."/>
            <person name="Weinstock K."/>
            <person name="West A.P."/>
            <person name="Willey D.L."/>
            <person name="Whitehead S.L."/>
            <person name="Wilming L."/>
            <person name="Wray P.W."/>
            <person name="Young L."/>
            <person name="Chen Y."/>
            <person name="Lovering R.C."/>
            <person name="Moschonas N.K."/>
            <person name="Siebert R."/>
            <person name="Fechtel K."/>
            <person name="Bentley D."/>
            <person name="Durbin R.M."/>
            <person name="Hubbard T."/>
            <person name="Doucette-Stamm L."/>
            <person name="Beck S."/>
            <person name="Smith D.R."/>
            <person name="Rogers J."/>
        </authorList>
    </citation>
    <scope>NUCLEOTIDE SEQUENCE [LARGE SCALE GENOMIC DNA]</scope>
</reference>
<reference key="2">
    <citation type="journal article" date="2004" name="Genome Res.">
        <title>The status, quality, and expansion of the NIH full-length cDNA project: the Mammalian Gene Collection (MGC).</title>
        <authorList>
            <consortium name="The MGC Project Team"/>
        </authorList>
    </citation>
    <scope>NUCLEOTIDE SEQUENCE [LARGE SCALE MRNA] (ISOFORM 1)</scope>
    <scope>VARIANT ARG-721</scope>
    <source>
        <tissue>Eye</tissue>
        <tissue>Kidney</tissue>
    </source>
</reference>
<reference key="3">
    <citation type="journal article" date="2004" name="Nat. Genet.">
        <title>Complete sequencing and characterization of 21,243 full-length human cDNAs.</title>
        <authorList>
            <person name="Ota T."/>
            <person name="Suzuki Y."/>
            <person name="Nishikawa T."/>
            <person name="Otsuki T."/>
            <person name="Sugiyama T."/>
            <person name="Irie R."/>
            <person name="Wakamatsu A."/>
            <person name="Hayashi K."/>
            <person name="Sato H."/>
            <person name="Nagai K."/>
            <person name="Kimura K."/>
            <person name="Makita H."/>
            <person name="Sekine M."/>
            <person name="Obayashi M."/>
            <person name="Nishi T."/>
            <person name="Shibahara T."/>
            <person name="Tanaka T."/>
            <person name="Ishii S."/>
            <person name="Yamamoto J."/>
            <person name="Saito K."/>
            <person name="Kawai Y."/>
            <person name="Isono Y."/>
            <person name="Nakamura Y."/>
            <person name="Nagahari K."/>
            <person name="Murakami K."/>
            <person name="Yasuda T."/>
            <person name="Iwayanagi T."/>
            <person name="Wagatsuma M."/>
            <person name="Shiratori A."/>
            <person name="Sudo H."/>
            <person name="Hosoiri T."/>
            <person name="Kaku Y."/>
            <person name="Kodaira H."/>
            <person name="Kondo H."/>
            <person name="Sugawara M."/>
            <person name="Takahashi M."/>
            <person name="Kanda K."/>
            <person name="Yokoi T."/>
            <person name="Furuya T."/>
            <person name="Kikkawa E."/>
            <person name="Omura Y."/>
            <person name="Abe K."/>
            <person name="Kamihara K."/>
            <person name="Katsuta N."/>
            <person name="Sato K."/>
            <person name="Tanikawa M."/>
            <person name="Yamazaki M."/>
            <person name="Ninomiya K."/>
            <person name="Ishibashi T."/>
            <person name="Yamashita H."/>
            <person name="Murakawa K."/>
            <person name="Fujimori K."/>
            <person name="Tanai H."/>
            <person name="Kimata M."/>
            <person name="Watanabe M."/>
            <person name="Hiraoka S."/>
            <person name="Chiba Y."/>
            <person name="Ishida S."/>
            <person name="Ono Y."/>
            <person name="Takiguchi S."/>
            <person name="Watanabe S."/>
            <person name="Yosida M."/>
            <person name="Hotuta T."/>
            <person name="Kusano J."/>
            <person name="Kanehori K."/>
            <person name="Takahashi-Fujii A."/>
            <person name="Hara H."/>
            <person name="Tanase T.-O."/>
            <person name="Nomura Y."/>
            <person name="Togiya S."/>
            <person name="Komai F."/>
            <person name="Hara R."/>
            <person name="Takeuchi K."/>
            <person name="Arita M."/>
            <person name="Imose N."/>
            <person name="Musashino K."/>
            <person name="Yuuki H."/>
            <person name="Oshima A."/>
            <person name="Sasaki N."/>
            <person name="Aotsuka S."/>
            <person name="Yoshikawa Y."/>
            <person name="Matsunawa H."/>
            <person name="Ichihara T."/>
            <person name="Shiohata N."/>
            <person name="Sano S."/>
            <person name="Moriya S."/>
            <person name="Momiyama H."/>
            <person name="Satoh N."/>
            <person name="Takami S."/>
            <person name="Terashima Y."/>
            <person name="Suzuki O."/>
            <person name="Nakagawa S."/>
            <person name="Senoh A."/>
            <person name="Mizoguchi H."/>
            <person name="Goto Y."/>
            <person name="Shimizu F."/>
            <person name="Wakebe H."/>
            <person name="Hishigaki H."/>
            <person name="Watanabe T."/>
            <person name="Sugiyama A."/>
            <person name="Takemoto M."/>
            <person name="Kawakami B."/>
            <person name="Yamazaki M."/>
            <person name="Watanabe K."/>
            <person name="Kumagai A."/>
            <person name="Itakura S."/>
            <person name="Fukuzumi Y."/>
            <person name="Fujimori Y."/>
            <person name="Komiyama M."/>
            <person name="Tashiro H."/>
            <person name="Tanigami A."/>
            <person name="Fujiwara T."/>
            <person name="Ono T."/>
            <person name="Yamada K."/>
            <person name="Fujii Y."/>
            <person name="Ozaki K."/>
            <person name="Hirao M."/>
            <person name="Ohmori Y."/>
            <person name="Kawabata A."/>
            <person name="Hikiji T."/>
            <person name="Kobatake N."/>
            <person name="Inagaki H."/>
            <person name="Ikema Y."/>
            <person name="Okamoto S."/>
            <person name="Okitani R."/>
            <person name="Kawakami T."/>
            <person name="Noguchi S."/>
            <person name="Itoh T."/>
            <person name="Shigeta K."/>
            <person name="Senba T."/>
            <person name="Matsumura K."/>
            <person name="Nakajima Y."/>
            <person name="Mizuno T."/>
            <person name="Morinaga M."/>
            <person name="Sasaki M."/>
            <person name="Togashi T."/>
            <person name="Oyama M."/>
            <person name="Hata H."/>
            <person name="Watanabe M."/>
            <person name="Komatsu T."/>
            <person name="Mizushima-Sugano J."/>
            <person name="Satoh T."/>
            <person name="Shirai Y."/>
            <person name="Takahashi Y."/>
            <person name="Nakagawa K."/>
            <person name="Okumura K."/>
            <person name="Nagase T."/>
            <person name="Nomura N."/>
            <person name="Kikuchi H."/>
            <person name="Masuho Y."/>
            <person name="Yamashita R."/>
            <person name="Nakai K."/>
            <person name="Yada T."/>
            <person name="Nakamura Y."/>
            <person name="Ohara O."/>
            <person name="Isogai T."/>
            <person name="Sugano S."/>
        </authorList>
    </citation>
    <scope>NUCLEOTIDE SEQUENCE [LARGE SCALE MRNA] OF 196-881 (ISOFORM 3)</scope>
    <source>
        <tissue>Ileal mucosa</tissue>
    </source>
</reference>
<reference key="4">
    <citation type="journal article" date="2007" name="BMC Genomics">
        <title>The full-ORF clone resource of the German cDNA consortium.</title>
        <authorList>
            <person name="Bechtel S."/>
            <person name="Rosenfelder H."/>
            <person name="Duda A."/>
            <person name="Schmidt C.P."/>
            <person name="Ernst U."/>
            <person name="Wellenreuther R."/>
            <person name="Mehrle A."/>
            <person name="Schuster C."/>
            <person name="Bahr A."/>
            <person name="Bloecker H."/>
            <person name="Heubner D."/>
            <person name="Hoerlein A."/>
            <person name="Michel G."/>
            <person name="Wedler H."/>
            <person name="Koehrer K."/>
            <person name="Ottenwaelder B."/>
            <person name="Poustka A."/>
            <person name="Wiemann S."/>
            <person name="Schupp I."/>
        </authorList>
    </citation>
    <scope>NUCLEOTIDE SEQUENCE [LARGE SCALE MRNA] OF 647-917 (ISOFORM 2)</scope>
    <scope>VARIANT ARG-721</scope>
    <source>
        <tissue>Rectum tumor</tissue>
    </source>
</reference>
<reference key="5">
    <citation type="journal article" date="2011" name="BMC Syst. Biol.">
        <title>Initial characterization of the human central proteome.</title>
        <authorList>
            <person name="Burkard T.R."/>
            <person name="Planyavsky M."/>
            <person name="Kaupe I."/>
            <person name="Breitwieser F.P."/>
            <person name="Buerckstuemmer T."/>
            <person name="Bennett K.L."/>
            <person name="Superti-Furga G."/>
            <person name="Colinge J."/>
        </authorList>
    </citation>
    <scope>IDENTIFICATION BY MASS SPECTROMETRY [LARGE SCALE ANALYSIS]</scope>
</reference>
<reference key="6">
    <citation type="journal article" date="2014" name="J. Proteomics">
        <title>An enzyme assisted RP-RPLC approach for in-depth analysis of human liver phosphoproteome.</title>
        <authorList>
            <person name="Bian Y."/>
            <person name="Song C."/>
            <person name="Cheng K."/>
            <person name="Dong M."/>
            <person name="Wang F."/>
            <person name="Huang J."/>
            <person name="Sun D."/>
            <person name="Wang L."/>
            <person name="Ye M."/>
            <person name="Zou H."/>
        </authorList>
    </citation>
    <scope>IDENTIFICATION BY MASS SPECTROMETRY [LARGE SCALE ANALYSIS]</scope>
    <source>
        <tissue>Liver</tissue>
    </source>
</reference>
<reference key="7">
    <citation type="journal article" date="2016" name="Endocrinology">
        <title>HKDC1 is a novel hexokinase involved in whole-body glucose use.</title>
        <authorList>
            <person name="Ludvik A.E."/>
            <person name="Pusec C.M."/>
            <person name="Priyadarshini M."/>
            <person name="Angueira A.R."/>
            <person name="Guo C."/>
            <person name="Lo A."/>
            <person name="Hershenhouse K.S."/>
            <person name="Yang G.Y."/>
            <person name="Ding X."/>
            <person name="Reddy T.E."/>
            <person name="Lowe W.L. Jr."/>
            <person name="Layden B.T."/>
        </authorList>
    </citation>
    <scope>TISSUE SPECIFICITY</scope>
</reference>
<reference key="8">
    <citation type="journal article" date="2018" name="J. Histochem. Cytochem.">
        <title>Studies on the tissue localization of HKDC1, a putative novel fifth hexokinase, in humans.</title>
        <authorList>
            <person name="Khan M.W."/>
            <person name="Ding X."/>
            <person name="Cotler S.J."/>
            <person name="Clarke M."/>
            <person name="Layden B.T."/>
        </authorList>
    </citation>
    <scope>TISSUE SPECIFICITY</scope>
</reference>
<reference key="9">
    <citation type="journal article" date="2019" name="Endocrinology">
        <title>Hepatic HKDC1 expression contributes to liver metabolism.</title>
        <authorList>
            <person name="Pusec C.M."/>
            <person name="De Jesus A."/>
            <person name="Khan M.W."/>
            <person name="Terry A.R."/>
            <person name="Ludvik A.E."/>
            <person name="Xu K."/>
            <person name="Giancola N."/>
            <person name="Pervaiz H."/>
            <person name="Daviau Smith E."/>
            <person name="Ding X."/>
            <person name="Harrison S."/>
            <person name="Chandel N.S."/>
            <person name="Becker T.C."/>
            <person name="Hay N."/>
            <person name="Ardehali H."/>
            <person name="Cordoba-Chacon J."/>
            <person name="Layden B.T."/>
        </authorList>
    </citation>
    <scope>FUNCTION</scope>
    <scope>CATALYTIC ACTIVITY</scope>
    <scope>SUBCELLULAR LOCATION</scope>
</reference>
<reference key="10">
    <citation type="journal article" date="2018" name="Hum. Mol. Genet.">
        <title>Whole-exome sequencing revealed HKDC1 as a candidate gene associated with autosomal-recessive retinitis pigmentosa.</title>
        <authorList>
            <person name="Zhang L."/>
            <person name="Sun Z."/>
            <person name="Zhao P."/>
            <person name="Huang L."/>
            <person name="Xu M."/>
            <person name="Yang Y."/>
            <person name="Chen X."/>
            <person name="Lu F."/>
            <person name="Zhang X."/>
            <person name="Wang H."/>
            <person name="Zhang S."/>
            <person name="Liu W."/>
            <person name="Jiang Z."/>
            <person name="Ma S."/>
            <person name="Chen R."/>
            <person name="Zhao C."/>
            <person name="Yang Z."/>
            <person name="Sui R."/>
            <person name="Zhu X."/>
        </authorList>
    </citation>
    <scope>VARIANT RP92 MET-58</scope>
    <scope>CHARACTERIZATION OF VARIANT RP92 MET-58</scope>
    <scope>INVOLVEMENT IN RP92</scope>
    <scope>SUBCELLULAR LOCATION</scope>
</reference>
<evidence type="ECO:0000250" key="1">
    <source>
        <dbReference type="UniProtKB" id="P19367"/>
    </source>
</evidence>
<evidence type="ECO:0000250" key="2">
    <source>
        <dbReference type="UniProtKB" id="Q91W97"/>
    </source>
</evidence>
<evidence type="ECO:0000255" key="3">
    <source>
        <dbReference type="PROSITE-ProRule" id="PRU01084"/>
    </source>
</evidence>
<evidence type="ECO:0000269" key="4">
    <source>
    </source>
</evidence>
<evidence type="ECO:0000269" key="5">
    <source>
    </source>
</evidence>
<evidence type="ECO:0000269" key="6">
    <source>
    </source>
</evidence>
<evidence type="ECO:0000269" key="7">
    <source>
    </source>
</evidence>
<evidence type="ECO:0000269" key="8">
    <source>
    </source>
</evidence>
<evidence type="ECO:0000269" key="9">
    <source>
    </source>
</evidence>
<evidence type="ECO:0000303" key="10">
    <source>
    </source>
</evidence>
<evidence type="ECO:0000303" key="11">
    <source>
    </source>
</evidence>
<evidence type="ECO:0000305" key="12"/>
<evidence type="ECO:0000305" key="13">
    <source>
    </source>
</evidence>
<evidence type="ECO:0000312" key="14">
    <source>
        <dbReference type="HGNC" id="HGNC:23302"/>
    </source>
</evidence>
<dbReference type="EC" id="2.7.1.1" evidence="9"/>
<dbReference type="EMBL" id="AL596223">
    <property type="status" value="NOT_ANNOTATED_CDS"/>
    <property type="molecule type" value="Genomic_DNA"/>
</dbReference>
<dbReference type="EMBL" id="BC012337">
    <property type="protein sequence ID" value="AAH12337.1"/>
    <property type="molecule type" value="mRNA"/>
</dbReference>
<dbReference type="EMBL" id="BC021278">
    <property type="protein sequence ID" value="AAH21278.1"/>
    <property type="status" value="ALT_FRAME"/>
    <property type="molecule type" value="mRNA"/>
</dbReference>
<dbReference type="EMBL" id="BC110504">
    <property type="protein sequence ID" value="AAI10505.1"/>
    <property type="molecule type" value="mRNA"/>
</dbReference>
<dbReference type="EMBL" id="BC110505">
    <property type="protein sequence ID" value="AAI10506.2"/>
    <property type="molecule type" value="mRNA"/>
</dbReference>
<dbReference type="EMBL" id="AK026414">
    <property type="protein sequence ID" value="BAB15478.1"/>
    <property type="status" value="ALT_FRAME"/>
    <property type="molecule type" value="mRNA"/>
</dbReference>
<dbReference type="EMBL" id="BX538078">
    <property type="protein sequence ID" value="CAD98002.1"/>
    <property type="molecule type" value="mRNA"/>
</dbReference>
<dbReference type="CCDS" id="CCDS7288.1">
    <molecule id="Q2TB90-1"/>
</dbReference>
<dbReference type="RefSeq" id="NP_079406.3">
    <molecule id="Q2TB90-1"/>
    <property type="nucleotide sequence ID" value="NM_025130.3"/>
</dbReference>
<dbReference type="SMR" id="Q2TB90"/>
<dbReference type="BioGRID" id="123172">
    <property type="interactions" value="83"/>
</dbReference>
<dbReference type="FunCoup" id="Q2TB90">
    <property type="interactions" value="598"/>
</dbReference>
<dbReference type="IntAct" id="Q2TB90">
    <property type="interactions" value="38"/>
</dbReference>
<dbReference type="MINT" id="Q2TB90"/>
<dbReference type="STRING" id="9606.ENSP00000346643"/>
<dbReference type="BindingDB" id="Q2TB90"/>
<dbReference type="ChEMBL" id="CHEMBL1741200"/>
<dbReference type="GlyGen" id="Q2TB90">
    <property type="glycosylation" value="1 site, 1 O-linked glycan (1 site)"/>
</dbReference>
<dbReference type="iPTMnet" id="Q2TB90"/>
<dbReference type="PhosphoSitePlus" id="Q2TB90"/>
<dbReference type="BioMuta" id="HKDC1"/>
<dbReference type="DMDM" id="311033440"/>
<dbReference type="jPOST" id="Q2TB90"/>
<dbReference type="MassIVE" id="Q2TB90"/>
<dbReference type="PaxDb" id="9606-ENSP00000346643"/>
<dbReference type="PeptideAtlas" id="Q2TB90"/>
<dbReference type="ProteomicsDB" id="61483">
    <molecule id="Q2TB90-1"/>
</dbReference>
<dbReference type="ProteomicsDB" id="61484">
    <molecule id="Q2TB90-2"/>
</dbReference>
<dbReference type="ProteomicsDB" id="61485">
    <molecule id="Q2TB90-3"/>
</dbReference>
<dbReference type="Antibodypedia" id="2524">
    <property type="antibodies" value="146 antibodies from 26 providers"/>
</dbReference>
<dbReference type="DNASU" id="80201"/>
<dbReference type="Ensembl" id="ENST00000354624.6">
    <molecule id="Q2TB90-1"/>
    <property type="protein sequence ID" value="ENSP00000346643.5"/>
    <property type="gene ID" value="ENSG00000156510.13"/>
</dbReference>
<dbReference type="GeneID" id="80201"/>
<dbReference type="KEGG" id="hsa:80201"/>
<dbReference type="MANE-Select" id="ENST00000354624.6">
    <property type="protein sequence ID" value="ENSP00000346643.5"/>
    <property type="RefSeq nucleotide sequence ID" value="NM_025130.4"/>
    <property type="RefSeq protein sequence ID" value="NP_079406.4"/>
</dbReference>
<dbReference type="UCSC" id="uc001jpf.4">
    <molecule id="Q2TB90-1"/>
    <property type="organism name" value="human"/>
</dbReference>
<dbReference type="AGR" id="HGNC:23302"/>
<dbReference type="CTD" id="80201"/>
<dbReference type="DisGeNET" id="80201"/>
<dbReference type="GeneCards" id="HKDC1"/>
<dbReference type="HGNC" id="HGNC:23302">
    <property type="gene designation" value="HKDC1"/>
</dbReference>
<dbReference type="HPA" id="ENSG00000156510">
    <property type="expression patterns" value="Tissue enhanced (intestine, retina)"/>
</dbReference>
<dbReference type="MalaCards" id="HKDC1"/>
<dbReference type="MIM" id="617221">
    <property type="type" value="gene"/>
</dbReference>
<dbReference type="MIM" id="619614">
    <property type="type" value="phenotype"/>
</dbReference>
<dbReference type="neXtProt" id="NX_Q2TB90"/>
<dbReference type="OpenTargets" id="ENSG00000156510"/>
<dbReference type="PharmGKB" id="PA134866195"/>
<dbReference type="VEuPathDB" id="HostDB:ENSG00000156510"/>
<dbReference type="eggNOG" id="KOG1369">
    <property type="taxonomic scope" value="Eukaryota"/>
</dbReference>
<dbReference type="GeneTree" id="ENSGT00950000182787"/>
<dbReference type="HOGENOM" id="CLU_014393_1_0_1"/>
<dbReference type="InParanoid" id="Q2TB90"/>
<dbReference type="OMA" id="RKLAPNC"/>
<dbReference type="OrthoDB" id="419537at2759"/>
<dbReference type="PAN-GO" id="Q2TB90">
    <property type="GO annotations" value="9 GO annotations based on evolutionary models"/>
</dbReference>
<dbReference type="PhylomeDB" id="Q2TB90"/>
<dbReference type="TreeFam" id="TF314238"/>
<dbReference type="BRENDA" id="2.7.1.1">
    <property type="organism ID" value="2681"/>
</dbReference>
<dbReference type="PathwayCommons" id="Q2TB90"/>
<dbReference type="Reactome" id="R-HSA-70171">
    <property type="pathway name" value="Glycolysis"/>
</dbReference>
<dbReference type="SignaLink" id="Q2TB90"/>
<dbReference type="UniPathway" id="UPA00109">
    <property type="reaction ID" value="UER00180"/>
</dbReference>
<dbReference type="UniPathway" id="UPA00242"/>
<dbReference type="BioGRID-ORCS" id="80201">
    <property type="hits" value="15 hits in 1156 CRISPR screens"/>
</dbReference>
<dbReference type="GenomeRNAi" id="80201"/>
<dbReference type="Pharos" id="Q2TB90">
    <property type="development level" value="Tbio"/>
</dbReference>
<dbReference type="PRO" id="PR:Q2TB90"/>
<dbReference type="Proteomes" id="UP000005640">
    <property type="component" value="Chromosome 10"/>
</dbReference>
<dbReference type="RNAct" id="Q2TB90">
    <property type="molecule type" value="protein"/>
</dbReference>
<dbReference type="Bgee" id="ENSG00000156510">
    <property type="expression patterns" value="Expressed in jejunal mucosa and 128 other cell types or tissues"/>
</dbReference>
<dbReference type="GO" id="GO:0005737">
    <property type="term" value="C:cytoplasm"/>
    <property type="evidence" value="ECO:0000314"/>
    <property type="project" value="UniProtKB"/>
</dbReference>
<dbReference type="GO" id="GO:0005829">
    <property type="term" value="C:cytosol"/>
    <property type="evidence" value="ECO:0000318"/>
    <property type="project" value="GO_Central"/>
</dbReference>
<dbReference type="GO" id="GO:0031966">
    <property type="term" value="C:mitochondrial membrane"/>
    <property type="evidence" value="ECO:0007669"/>
    <property type="project" value="UniProtKB-SubCell"/>
</dbReference>
<dbReference type="GO" id="GO:0005739">
    <property type="term" value="C:mitochondrion"/>
    <property type="evidence" value="ECO:0000314"/>
    <property type="project" value="HPA"/>
</dbReference>
<dbReference type="GO" id="GO:0001917">
    <property type="term" value="C:photoreceptor inner segment"/>
    <property type="evidence" value="ECO:0007669"/>
    <property type="project" value="UniProtKB-SubCell"/>
</dbReference>
<dbReference type="GO" id="GO:0005524">
    <property type="term" value="F:ATP binding"/>
    <property type="evidence" value="ECO:0007669"/>
    <property type="project" value="UniProtKB-KW"/>
</dbReference>
<dbReference type="GO" id="GO:0005536">
    <property type="term" value="F:D-glucose binding"/>
    <property type="evidence" value="ECO:0007669"/>
    <property type="project" value="InterPro"/>
</dbReference>
<dbReference type="GO" id="GO:0008865">
    <property type="term" value="F:fructokinase activity"/>
    <property type="evidence" value="ECO:0000318"/>
    <property type="project" value="GO_Central"/>
</dbReference>
<dbReference type="GO" id="GO:0004340">
    <property type="term" value="F:glucokinase activity"/>
    <property type="evidence" value="ECO:0000314"/>
    <property type="project" value="UniProtKB"/>
</dbReference>
<dbReference type="GO" id="GO:0051156">
    <property type="term" value="P:glucose 6-phosphate metabolic process"/>
    <property type="evidence" value="ECO:0000314"/>
    <property type="project" value="UniProtKB"/>
</dbReference>
<dbReference type="GO" id="GO:0006006">
    <property type="term" value="P:glucose metabolic process"/>
    <property type="evidence" value="ECO:0000318"/>
    <property type="project" value="GO_Central"/>
</dbReference>
<dbReference type="GO" id="GO:0006096">
    <property type="term" value="P:glycolytic process"/>
    <property type="evidence" value="ECO:0000318"/>
    <property type="project" value="GO_Central"/>
</dbReference>
<dbReference type="GO" id="GO:0001678">
    <property type="term" value="P:intracellular glucose homeostasis"/>
    <property type="evidence" value="ECO:0000314"/>
    <property type="project" value="UniProtKB"/>
</dbReference>
<dbReference type="CDD" id="cd24126">
    <property type="entry name" value="ASKHA_NBD_HKDC1_meta_rpt1"/>
    <property type="match status" value="1"/>
</dbReference>
<dbReference type="CDD" id="cd24130">
    <property type="entry name" value="ASKHA_NBD_HKDC1_meta_rpt2"/>
    <property type="match status" value="1"/>
</dbReference>
<dbReference type="FunFam" id="3.30.420.40:FF:000015">
    <property type="entry name" value="Hexokinase 1"/>
    <property type="match status" value="2"/>
</dbReference>
<dbReference type="FunFam" id="3.40.367.20:FF:000001">
    <property type="entry name" value="Hexokinase 1"/>
    <property type="match status" value="1"/>
</dbReference>
<dbReference type="FunFam" id="3.40.367.20:FF:000020">
    <property type="entry name" value="Hexokinase-1"/>
    <property type="match status" value="1"/>
</dbReference>
<dbReference type="Gene3D" id="3.30.420.40">
    <property type="match status" value="2"/>
</dbReference>
<dbReference type="Gene3D" id="3.40.367.20">
    <property type="match status" value="2"/>
</dbReference>
<dbReference type="InterPro" id="IPR043129">
    <property type="entry name" value="ATPase_NBD"/>
</dbReference>
<dbReference type="InterPro" id="IPR001312">
    <property type="entry name" value="Hexokinase"/>
</dbReference>
<dbReference type="InterPro" id="IPR019807">
    <property type="entry name" value="Hexokinase_BS"/>
</dbReference>
<dbReference type="InterPro" id="IPR022673">
    <property type="entry name" value="Hexokinase_C"/>
</dbReference>
<dbReference type="InterPro" id="IPR022672">
    <property type="entry name" value="Hexokinase_N"/>
</dbReference>
<dbReference type="PANTHER" id="PTHR19443">
    <property type="entry name" value="HEXOKINASE"/>
    <property type="match status" value="1"/>
</dbReference>
<dbReference type="PANTHER" id="PTHR19443:SF28">
    <property type="entry name" value="HEXOKINASE HKDC1"/>
    <property type="match status" value="1"/>
</dbReference>
<dbReference type="Pfam" id="PF00349">
    <property type="entry name" value="Hexokinase_1"/>
    <property type="match status" value="2"/>
</dbReference>
<dbReference type="Pfam" id="PF03727">
    <property type="entry name" value="Hexokinase_2"/>
    <property type="match status" value="2"/>
</dbReference>
<dbReference type="PRINTS" id="PR00475">
    <property type="entry name" value="HEXOKINASE"/>
</dbReference>
<dbReference type="SUPFAM" id="SSF53067">
    <property type="entry name" value="Actin-like ATPase domain"/>
    <property type="match status" value="4"/>
</dbReference>
<dbReference type="PROSITE" id="PS00378">
    <property type="entry name" value="HEXOKINASE_1"/>
    <property type="match status" value="1"/>
</dbReference>
<dbReference type="PROSITE" id="PS51748">
    <property type="entry name" value="HEXOKINASE_2"/>
    <property type="match status" value="2"/>
</dbReference>
<sequence length="917" mass="102545">MFAVHLMAFYFSKLKEDQIKKVDRFLYHMRLSDDTLLDIMRRFRAEMEKGLAKDTNPTAAVKMLPTFVRAIPDGSENGEFLSLDLGGSKFRVLKVQVAEEGKRHVQMESQFYPTPNEIIRGNGTELFEYVADCLADFMKTKDLKHKKLPLGLTFSFPCRQTKLEEGVLLSWTKKFKARGVQDTDVVSRLTKAMRRHKDMDVDILALVNDTVGTMMTCAYDDPYCEVGVIIGTGTNACYMEDMSNIDLVEGDEGRMCINTEWGAFGDDGALEDIRTEFDRELDLGSLNPGKQLFEKMISGLYLGELVRLILLKMAKAGLLFGGEKSSALHTKGKIETRHVAAMEKYKEGLANTREILVDLGLEPSEADCIAVQHVCTIVSFRSANLCAAALAAILTRLRENKKVERLRTTVGMDGTLYKIHPQYPKRLHKVVRKLVPSCDVRFLLSESGSTKGAAMVTAVASRVQAQRKQIDRVLALFQLTREQLVDVQAKMRAELEYGLKKKSHGLATVRMLPTYVCGLPDGTEKGKFLALDLGGTNFRVLLVKIRSGRRSVRMYNKIFAIPLEIMQGTGEELFDHIVQCIADFLDYMGLKGASLPLGFTFSFPCRQMSIDKGTLIGWTKGFKATDCEGEDVVDMLREAIKRRNEFDLDIVAVVNDTVGTMMTCGYEDPNCEIGLIAGTGSNMCYMEDMRNIEMVEGGEGKMCINTEWGGFGDNGCIDDIWTRYDTEVDEGSLNPGKQRYEKMTSGMYLGEIVRQILIDLTKQGLLFRGQISERLRTRGIFETKFLSQIESDRLALLQVRRILQQLGLDSTCEDSIVVKEVCGAVSRRAAQLCGAGLAAIVEKRREDQGLEHLRITVGVDGTLYKLHPHFSRILQETVKELAPRCDVTFMLSEDGSGKGAALITAVAKRLQQAQKEN</sequence>
<feature type="chain" id="PRO_0000299035" description="Hexokinase HKDC1">
    <location>
        <begin position="1"/>
        <end position="917"/>
    </location>
</feature>
<feature type="domain" description="Hexokinase 1" evidence="3">
    <location>
        <begin position="16"/>
        <end position="458"/>
    </location>
</feature>
<feature type="domain" description="Hexokinase 2" evidence="3">
    <location>
        <begin position="464"/>
        <end position="905"/>
    </location>
</feature>
<feature type="region of interest" description="Mitochondrial-binding peptide (MBP)" evidence="13">
    <location>
        <begin position="1"/>
        <end position="20"/>
    </location>
</feature>
<feature type="region of interest" description="Hexokinase small subdomain 1" evidence="3">
    <location>
        <begin position="73"/>
        <end position="207"/>
    </location>
</feature>
<feature type="region of interest" description="Hexokinase large subdomain 1" evidence="3">
    <location>
        <begin position="208"/>
        <end position="447"/>
    </location>
</feature>
<feature type="region of interest" description="Hexokinase small subdomain 2" evidence="3">
    <location>
        <begin position="521"/>
        <end position="654"/>
    </location>
</feature>
<feature type="region of interest" description="Hexokinase large subdomain 2" evidence="3">
    <location>
        <begin position="655"/>
        <end position="894"/>
    </location>
</feature>
<feature type="binding site" evidence="1">
    <location>
        <position position="30"/>
    </location>
    <ligand>
        <name>ATP</name>
        <dbReference type="ChEBI" id="CHEBI:30616"/>
        <label>1</label>
    </ligand>
</feature>
<feature type="binding site" evidence="1">
    <location>
        <begin position="84"/>
        <end position="91"/>
    </location>
    <ligand>
        <name>D-glucose 6-phosphate</name>
        <dbReference type="ChEBI" id="CHEBI:61548"/>
        <label>1</label>
    </ligand>
</feature>
<feature type="binding site" evidence="1">
    <location>
        <begin position="84"/>
        <end position="89"/>
    </location>
    <ligand>
        <name>ATP</name>
        <dbReference type="ChEBI" id="CHEBI:30616"/>
        <label>1</label>
    </ligand>
</feature>
<feature type="binding site" evidence="1">
    <location>
        <position position="155"/>
    </location>
    <ligand>
        <name>D-glucose</name>
        <dbReference type="ChEBI" id="CHEBI:4167"/>
        <label>1</label>
    </ligand>
</feature>
<feature type="binding site" evidence="1">
    <location>
        <begin position="172"/>
        <end position="173"/>
    </location>
    <ligand>
        <name>D-glucose</name>
        <dbReference type="ChEBI" id="CHEBI:4167"/>
        <label>1</label>
    </ligand>
</feature>
<feature type="binding site" evidence="1">
    <location>
        <begin position="208"/>
        <end position="209"/>
    </location>
    <ligand>
        <name>D-glucose</name>
        <dbReference type="ChEBI" id="CHEBI:4167"/>
        <label>1</label>
    </ligand>
</feature>
<feature type="binding site" evidence="1">
    <location>
        <position position="209"/>
    </location>
    <ligand>
        <name>D-glucose 6-phosphate</name>
        <dbReference type="ChEBI" id="CHEBI:61548"/>
        <label>1</label>
    </ligand>
</feature>
<feature type="binding site" evidence="1">
    <location>
        <position position="232"/>
    </location>
    <ligand>
        <name>D-glucose 6-phosphate</name>
        <dbReference type="ChEBI" id="CHEBI:61548"/>
        <label>1</label>
    </ligand>
</feature>
<feature type="binding site" evidence="1">
    <location>
        <position position="235"/>
    </location>
    <ligand>
        <name>D-glucose</name>
        <dbReference type="ChEBI" id="CHEBI:4167"/>
        <label>1</label>
    </ligand>
</feature>
<feature type="binding site" evidence="1">
    <location>
        <position position="260"/>
    </location>
    <ligand>
        <name>D-glucose</name>
        <dbReference type="ChEBI" id="CHEBI:4167"/>
        <label>1</label>
    </ligand>
</feature>
<feature type="binding site" evidence="1">
    <location>
        <begin position="291"/>
        <end position="294"/>
    </location>
    <ligand>
        <name>D-glucose</name>
        <dbReference type="ChEBI" id="CHEBI:4167"/>
        <label>1</label>
    </ligand>
</feature>
<feature type="binding site" evidence="1">
    <location>
        <begin position="413"/>
        <end position="415"/>
    </location>
    <ligand>
        <name>D-glucose 6-phosphate</name>
        <dbReference type="ChEBI" id="CHEBI:61548"/>
        <label>1</label>
    </ligand>
</feature>
<feature type="binding site" evidence="1">
    <location>
        <begin position="425"/>
        <end position="426"/>
    </location>
    <ligand>
        <name>ATP</name>
        <dbReference type="ChEBI" id="CHEBI:30616"/>
        <label>1</label>
    </ligand>
</feature>
<feature type="binding site" evidence="1">
    <location>
        <position position="449"/>
    </location>
    <ligand>
        <name>D-glucose 6-phosphate</name>
        <dbReference type="ChEBI" id="CHEBI:61548"/>
        <label>1</label>
    </ligand>
</feature>
<feature type="binding site" evidence="1">
    <location>
        <begin position="532"/>
        <end position="537"/>
    </location>
    <ligand>
        <name>ATP</name>
        <dbReference type="ChEBI" id="CHEBI:30616"/>
        <label>2</label>
    </ligand>
</feature>
<feature type="binding site" evidence="1">
    <location>
        <begin position="532"/>
        <end position="536"/>
    </location>
    <ligand>
        <name>D-glucose 6-phosphate</name>
        <dbReference type="ChEBI" id="CHEBI:61548"/>
        <label>2</label>
    </ligand>
</feature>
<feature type="binding site" evidence="1">
    <location>
        <begin position="602"/>
        <end position="603"/>
    </location>
    <ligand>
        <name>D-glucose</name>
        <dbReference type="ChEBI" id="CHEBI:4167"/>
        <label>2</label>
    </ligand>
</feature>
<feature type="binding site" evidence="1">
    <location>
        <begin position="619"/>
        <end position="620"/>
    </location>
    <ligand>
        <name>D-glucose</name>
        <dbReference type="ChEBI" id="CHEBI:4167"/>
        <label>2</label>
    </ligand>
</feature>
<feature type="binding site" evidence="1">
    <location>
        <begin position="655"/>
        <end position="656"/>
    </location>
    <ligand>
        <name>D-glucose</name>
        <dbReference type="ChEBI" id="CHEBI:4167"/>
        <label>2</label>
    </ligand>
</feature>
<feature type="binding site" evidence="1">
    <location>
        <position position="656"/>
    </location>
    <ligand>
        <name>D-glucose 6-phosphate</name>
        <dbReference type="ChEBI" id="CHEBI:61548"/>
        <label>2</label>
    </ligand>
</feature>
<feature type="binding site" evidence="1">
    <location>
        <position position="679"/>
    </location>
    <ligand>
        <name>ATP</name>
        <dbReference type="ChEBI" id="CHEBI:30616"/>
        <label>2</label>
    </ligand>
</feature>
<feature type="binding site" evidence="1">
    <location>
        <position position="679"/>
    </location>
    <ligand>
        <name>D-glucose 6-phosphate</name>
        <dbReference type="ChEBI" id="CHEBI:61548"/>
        <label>2</label>
    </ligand>
</feature>
<feature type="binding site" evidence="1">
    <location>
        <begin position="681"/>
        <end position="682"/>
    </location>
    <ligand>
        <name>D-glucose</name>
        <dbReference type="ChEBI" id="CHEBI:4167"/>
        <label>2</label>
    </ligand>
</feature>
<feature type="binding site" evidence="1">
    <location>
        <position position="707"/>
    </location>
    <ligand>
        <name>D-glucose</name>
        <dbReference type="ChEBI" id="CHEBI:4167"/>
        <label>2</label>
    </ligand>
</feature>
<feature type="binding site" evidence="1">
    <location>
        <position position="741"/>
    </location>
    <ligand>
        <name>D-glucose</name>
        <dbReference type="ChEBI" id="CHEBI:4167"/>
        <label>2</label>
    </ligand>
</feature>
<feature type="binding site" evidence="1">
    <location>
        <begin position="746"/>
        <end position="747"/>
    </location>
    <ligand>
        <name>ATP</name>
        <dbReference type="ChEBI" id="CHEBI:30616"/>
        <label>2</label>
    </ligand>
</feature>
<feature type="binding site" evidence="1">
    <location>
        <begin position="783"/>
        <end position="787"/>
    </location>
    <ligand>
        <name>ATP</name>
        <dbReference type="ChEBI" id="CHEBI:30616"/>
        <label>2</label>
    </ligand>
</feature>
<feature type="binding site" evidence="1">
    <location>
        <begin position="860"/>
        <end position="862"/>
    </location>
    <ligand>
        <name>D-glucose 6-phosphate</name>
        <dbReference type="ChEBI" id="CHEBI:61548"/>
        <label>2</label>
    </ligand>
</feature>
<feature type="binding site" evidence="1">
    <location>
        <begin position="862"/>
        <end position="866"/>
    </location>
    <ligand>
        <name>ATP</name>
        <dbReference type="ChEBI" id="CHEBI:30616"/>
        <label>2</label>
    </ligand>
</feature>
<feature type="binding site" evidence="1">
    <location>
        <position position="896"/>
    </location>
    <ligand>
        <name>D-glucose 6-phosphate</name>
        <dbReference type="ChEBI" id="CHEBI:61548"/>
        <label>2</label>
    </ligand>
</feature>
<feature type="splice variant" id="VSP_027533" description="In isoform 3." evidence="10">
    <original>NTEWGGFGDNGCIDDIWTRYDTEVDEGSLNPG</original>
    <variation>CFSFCLWFVLQVLIVVLRIVRYRKSSKLIKKF</variation>
    <location>
        <begin position="705"/>
        <end position="736"/>
    </location>
</feature>
<feature type="splice variant" id="VSP_027534" description="In isoform 3." evidence="10">
    <location>
        <begin position="737"/>
        <end position="917"/>
    </location>
</feature>
<feature type="splice variant" id="VSP_027535" description="In isoform 2." evidence="11">
    <original>SDRLALLQVRRILQQL</original>
    <variation>RMLSVIDAYCLDLLFH</variation>
    <location>
        <begin position="791"/>
        <end position="806"/>
    </location>
</feature>
<feature type="splice variant" id="VSP_027536" description="In isoform 2." evidence="11">
    <location>
        <begin position="807"/>
        <end position="917"/>
    </location>
</feature>
<feature type="sequence variant" id="VAR_034776" description="In dbSNP:rs10823320.">
    <original>D</original>
    <variation>G</variation>
    <location>
        <position position="54"/>
    </location>
</feature>
<feature type="sequence variant" id="VAR_086465" description="In RP92; uncertain significance; slightly decreased hexokinase activity; dbSNP:rs142379141." evidence="8">
    <original>T</original>
    <variation>M</variation>
    <location>
        <position position="58"/>
    </location>
</feature>
<feature type="sequence variant" id="VAR_034777" description="In dbSNP:rs874556.">
    <original>T</original>
    <variation>I</variation>
    <location>
        <position position="124"/>
    </location>
</feature>
<feature type="sequence variant" id="VAR_034778" description="In dbSNP:rs7899445.">
    <original>L</original>
    <variation>P</variation>
    <location>
        <position position="204"/>
    </location>
</feature>
<feature type="sequence variant" id="VAR_034779" description="In dbSNP:rs1111335." evidence="4 5">
    <original>W</original>
    <variation>R</variation>
    <location>
        <position position="721"/>
    </location>
</feature>
<feature type="sequence variant" id="VAR_034780" description="In dbSNP:rs906219.">
    <original>N</original>
    <variation>K</variation>
    <location>
        <position position="917"/>
    </location>
</feature>
<organism>
    <name type="scientific">Homo sapiens</name>
    <name type="common">Human</name>
    <dbReference type="NCBI Taxonomy" id="9606"/>
    <lineage>
        <taxon>Eukaryota</taxon>
        <taxon>Metazoa</taxon>
        <taxon>Chordata</taxon>
        <taxon>Craniata</taxon>
        <taxon>Vertebrata</taxon>
        <taxon>Euteleostomi</taxon>
        <taxon>Mammalia</taxon>
        <taxon>Eutheria</taxon>
        <taxon>Euarchontoglires</taxon>
        <taxon>Primates</taxon>
        <taxon>Haplorrhini</taxon>
        <taxon>Catarrhini</taxon>
        <taxon>Hominidae</taxon>
        <taxon>Homo</taxon>
    </lineage>
</organism>
<comment type="function">
    <text evidence="2 9">Catalyzes the phosphorylation of hexose to hexose 6-phosphate, although at very low level compared to other hexokinases (PubMed:30517626). Has low glucose phosphorylating activity compared to other hexokinases (PubMed:30517626). Involved in glucose homeostasis and hepatic lipid accumulation. Required to maintain whole-body glucose homeostasis during pregnancy; however additional evidences are required to confirm this role (By similarity).</text>
</comment>
<comment type="catalytic activity">
    <reaction evidence="9">
        <text>a D-hexose + ATP = a D-hexose 6-phosphate + ADP + H(+)</text>
        <dbReference type="Rhea" id="RHEA:22740"/>
        <dbReference type="ChEBI" id="CHEBI:4194"/>
        <dbReference type="ChEBI" id="CHEBI:15378"/>
        <dbReference type="ChEBI" id="CHEBI:30616"/>
        <dbReference type="ChEBI" id="CHEBI:229467"/>
        <dbReference type="ChEBI" id="CHEBI:456216"/>
        <dbReference type="EC" id="2.7.1.1"/>
    </reaction>
    <physiologicalReaction direction="left-to-right" evidence="9">
        <dbReference type="Rhea" id="RHEA:22741"/>
    </physiologicalReaction>
</comment>
<comment type="catalytic activity">
    <reaction evidence="9">
        <text>D-glucose + ATP = D-glucose 6-phosphate + ADP + H(+)</text>
        <dbReference type="Rhea" id="RHEA:17825"/>
        <dbReference type="ChEBI" id="CHEBI:4167"/>
        <dbReference type="ChEBI" id="CHEBI:15378"/>
        <dbReference type="ChEBI" id="CHEBI:30616"/>
        <dbReference type="ChEBI" id="CHEBI:61548"/>
        <dbReference type="ChEBI" id="CHEBI:456216"/>
        <dbReference type="EC" id="2.7.1.1"/>
    </reaction>
    <physiologicalReaction direction="left-to-right" evidence="9">
        <dbReference type="Rhea" id="RHEA:17826"/>
    </physiologicalReaction>
</comment>
<comment type="pathway">
    <text evidence="13">Carbohydrate metabolism; hexose metabolism.</text>
</comment>
<comment type="pathway">
    <text evidence="13">Carbohydrate degradation; glycolysis; D-glyceraldehyde 3-phosphate and glycerone phosphate from D-glucose: step 1/4.</text>
</comment>
<comment type="subcellular location">
    <subcellularLocation>
        <location evidence="8">Cytoplasm</location>
    </subcellularLocation>
    <subcellularLocation>
        <location evidence="13">Mitochondrion membrane</location>
        <topology evidence="12">Peripheral membrane protein</topology>
    </subcellularLocation>
    <subcellularLocation>
        <location evidence="2">Photoreceptor inner segment</location>
    </subcellularLocation>
    <text evidence="13">The mitochondrial-binding peptide (MBP) region promotes association with the mitochondrion.</text>
</comment>
<comment type="alternative products">
    <event type="alternative splicing"/>
    <isoform>
        <id>Q2TB90-1</id>
        <name>1</name>
        <sequence type="displayed"/>
    </isoform>
    <isoform>
        <id>Q2TB90-2</id>
        <name>2</name>
        <sequence type="described" ref="VSP_027535 VSP_027536"/>
    </isoform>
    <isoform>
        <id>Q2TB90-3</id>
        <name>3</name>
        <sequence type="described" ref="VSP_027533 VSP_027534"/>
    </isoform>
</comment>
<comment type="tissue specificity">
    <text evidence="6 7">Widely expressed (PubMed:27459389, PubMed:29401404). Highly expressed in the brush border, surface epithelium and the myenteric plexus of the small and large intestines; the acinar centrocytes and interlobular ducts of the pancreas; and the alveolar macrophages in the lungs (at protein level) (PubMed:29401404). Present at moderate level in the thyroid follicular epithelium (at protein level) (PubMed:29401404).</text>
</comment>
<comment type="disease" evidence="8">
    <disease id="DI-06270">
        <name>Retinitis pigmentosa 92</name>
        <acronym>RP92</acronym>
        <description>A form of retinitis pigmentosa, a retinal dystrophy belonging to the group of pigmentary retinopathies. Retinitis pigmentosa is characterized by retinal pigment deposits visible on fundus examination and primary loss of rod photoreceptor cells followed by secondary loss of cone photoreceptors. Patients typically have night vision blindness and loss of midperipheral visual field. RP92 is an autosomal recessive, mild form with onset of night blindness and vision loss in the third to sixth decades of life.</description>
        <dbReference type="MIM" id="619614"/>
    </disease>
    <text>The disease may be caused by variants affecting the gene represented in this entry.</text>
</comment>
<comment type="similarity">
    <text evidence="3 12">Belongs to the hexokinase family.</text>
</comment>
<comment type="sequence caution" evidence="12">
    <conflict type="frameshift">
        <sequence resource="EMBL-CDS" id="AAH21278"/>
    </conflict>
</comment>
<comment type="sequence caution" evidence="12">
    <conflict type="frameshift">
        <sequence resource="EMBL-CDS" id="BAB15478"/>
    </conflict>
</comment>
<gene>
    <name evidence="14" type="primary">HKDC1</name>
</gene>
<name>HKDC1_HUMAN</name>
<protein>
    <recommendedName>
        <fullName evidence="12">Hexokinase HKDC1</fullName>
        <ecNumber evidence="9">2.7.1.1</ecNumber>
    </recommendedName>
    <alternativeName>
        <fullName evidence="12">Hexokinase domain-containing protein 1</fullName>
    </alternativeName>
</protein>
<accession>Q2TB90</accession>
<accession>B5MDN9</accession>
<accession>Q2TB91</accession>
<accession>Q5VTC7</accession>
<accession>Q7Z373</accession>
<accession>Q8WU37</accession>
<accession>Q96EH2</accession>
<accession>Q9H5Y9</accession>
<keyword id="KW-0025">Alternative splicing</keyword>
<keyword id="KW-0067">ATP-binding</keyword>
<keyword id="KW-0963">Cytoplasm</keyword>
<keyword id="KW-0324">Glycolysis</keyword>
<keyword id="KW-0418">Kinase</keyword>
<keyword id="KW-0472">Membrane</keyword>
<keyword id="KW-0496">Mitochondrion</keyword>
<keyword id="KW-0547">Nucleotide-binding</keyword>
<keyword id="KW-1267">Proteomics identification</keyword>
<keyword id="KW-1185">Reference proteome</keyword>
<keyword id="KW-0677">Repeat</keyword>
<keyword id="KW-0682">Retinitis pigmentosa</keyword>
<keyword id="KW-0808">Transferase</keyword>